<accession>A5CCJ5</accession>
<dbReference type="EMBL" id="AM494475">
    <property type="protein sequence ID" value="CAM79425.1"/>
    <property type="molecule type" value="Genomic_DNA"/>
</dbReference>
<dbReference type="RefSeq" id="WP_011944423.1">
    <property type="nucleotide sequence ID" value="NC_009488.1"/>
</dbReference>
<dbReference type="SMR" id="A5CCJ5"/>
<dbReference type="KEGG" id="ots:OTBS_0359"/>
<dbReference type="eggNOG" id="COG0098">
    <property type="taxonomic scope" value="Bacteria"/>
</dbReference>
<dbReference type="HOGENOM" id="CLU_065898_2_2_5"/>
<dbReference type="Proteomes" id="UP000001565">
    <property type="component" value="Chromosome"/>
</dbReference>
<dbReference type="GO" id="GO:0015935">
    <property type="term" value="C:small ribosomal subunit"/>
    <property type="evidence" value="ECO:0007669"/>
    <property type="project" value="InterPro"/>
</dbReference>
<dbReference type="GO" id="GO:0019843">
    <property type="term" value="F:rRNA binding"/>
    <property type="evidence" value="ECO:0007669"/>
    <property type="project" value="UniProtKB-UniRule"/>
</dbReference>
<dbReference type="GO" id="GO:0003735">
    <property type="term" value="F:structural constituent of ribosome"/>
    <property type="evidence" value="ECO:0007669"/>
    <property type="project" value="InterPro"/>
</dbReference>
<dbReference type="GO" id="GO:0006412">
    <property type="term" value="P:translation"/>
    <property type="evidence" value="ECO:0007669"/>
    <property type="project" value="UniProtKB-UniRule"/>
</dbReference>
<dbReference type="FunFam" id="3.30.230.10:FF:000002">
    <property type="entry name" value="30S ribosomal protein S5"/>
    <property type="match status" value="1"/>
</dbReference>
<dbReference type="Gene3D" id="3.30.160.20">
    <property type="match status" value="1"/>
</dbReference>
<dbReference type="Gene3D" id="3.30.230.10">
    <property type="match status" value="1"/>
</dbReference>
<dbReference type="HAMAP" id="MF_01307_B">
    <property type="entry name" value="Ribosomal_uS5_B"/>
    <property type="match status" value="1"/>
</dbReference>
<dbReference type="InterPro" id="IPR020568">
    <property type="entry name" value="Ribosomal_Su5_D2-typ_SF"/>
</dbReference>
<dbReference type="InterPro" id="IPR000851">
    <property type="entry name" value="Ribosomal_uS5"/>
</dbReference>
<dbReference type="InterPro" id="IPR005712">
    <property type="entry name" value="Ribosomal_uS5_bac-type"/>
</dbReference>
<dbReference type="InterPro" id="IPR005324">
    <property type="entry name" value="Ribosomal_uS5_C"/>
</dbReference>
<dbReference type="InterPro" id="IPR013810">
    <property type="entry name" value="Ribosomal_uS5_N"/>
</dbReference>
<dbReference type="InterPro" id="IPR018192">
    <property type="entry name" value="Ribosomal_uS5_N_CS"/>
</dbReference>
<dbReference type="InterPro" id="IPR014721">
    <property type="entry name" value="Ribsml_uS5_D2-typ_fold_subgr"/>
</dbReference>
<dbReference type="NCBIfam" id="TIGR01021">
    <property type="entry name" value="rpsE_bact"/>
    <property type="match status" value="1"/>
</dbReference>
<dbReference type="PANTHER" id="PTHR48277">
    <property type="entry name" value="MITOCHONDRIAL RIBOSOMAL PROTEIN S5"/>
    <property type="match status" value="1"/>
</dbReference>
<dbReference type="PANTHER" id="PTHR48277:SF1">
    <property type="entry name" value="MITOCHONDRIAL RIBOSOMAL PROTEIN S5"/>
    <property type="match status" value="1"/>
</dbReference>
<dbReference type="Pfam" id="PF00333">
    <property type="entry name" value="Ribosomal_S5"/>
    <property type="match status" value="1"/>
</dbReference>
<dbReference type="Pfam" id="PF03719">
    <property type="entry name" value="Ribosomal_S5_C"/>
    <property type="match status" value="1"/>
</dbReference>
<dbReference type="SUPFAM" id="SSF54768">
    <property type="entry name" value="dsRNA-binding domain-like"/>
    <property type="match status" value="1"/>
</dbReference>
<dbReference type="SUPFAM" id="SSF54211">
    <property type="entry name" value="Ribosomal protein S5 domain 2-like"/>
    <property type="match status" value="1"/>
</dbReference>
<dbReference type="PROSITE" id="PS00585">
    <property type="entry name" value="RIBOSOMAL_S5"/>
    <property type="match status" value="1"/>
</dbReference>
<dbReference type="PROSITE" id="PS50881">
    <property type="entry name" value="S5_DSRBD"/>
    <property type="match status" value="1"/>
</dbReference>
<organism>
    <name type="scientific">Orientia tsutsugamushi (strain Boryong)</name>
    <name type="common">Rickettsia tsutsugamushi</name>
    <dbReference type="NCBI Taxonomy" id="357244"/>
    <lineage>
        <taxon>Bacteria</taxon>
        <taxon>Pseudomonadati</taxon>
        <taxon>Pseudomonadota</taxon>
        <taxon>Alphaproteobacteria</taxon>
        <taxon>Rickettsiales</taxon>
        <taxon>Rickettsiaceae</taxon>
        <taxon>Rickettsieae</taxon>
        <taxon>Orientia</taxon>
    </lineage>
</organism>
<proteinExistence type="inferred from homology"/>
<feature type="chain" id="PRO_0000323164" description="Small ribosomal subunit protein uS5">
    <location>
        <begin position="1"/>
        <end position="172"/>
    </location>
</feature>
<feature type="domain" description="S5 DRBM" evidence="1">
    <location>
        <begin position="7"/>
        <end position="70"/>
    </location>
</feature>
<evidence type="ECO:0000255" key="1">
    <source>
        <dbReference type="HAMAP-Rule" id="MF_01307"/>
    </source>
</evidence>
<evidence type="ECO:0000305" key="2"/>
<comment type="function">
    <text evidence="1">With S4 and S12 plays an important role in translational accuracy.</text>
</comment>
<comment type="function">
    <text evidence="1">Located at the back of the 30S subunit body where it stabilizes the conformation of the head with respect to the body.</text>
</comment>
<comment type="subunit">
    <text evidence="1">Part of the 30S ribosomal subunit. Contacts proteins S4 and S8.</text>
</comment>
<comment type="domain">
    <text>The N-terminal domain interacts with the head of the 30S subunit; the C-terminal domain interacts with the body and contacts protein S4. The interaction surface between S4 and S5 is involved in control of translational fidelity.</text>
</comment>
<comment type="similarity">
    <text evidence="1">Belongs to the universal ribosomal protein uS5 family.</text>
</comment>
<name>RS5_ORITB</name>
<reference key="1">
    <citation type="journal article" date="2007" name="Proc. Natl. Acad. Sci. U.S.A.">
        <title>The Orientia tsutsugamushi genome reveals massive proliferation of conjugative type IV secretion system and host-cell interaction genes.</title>
        <authorList>
            <person name="Cho N.-H."/>
            <person name="Kim H.-R."/>
            <person name="Lee J.-H."/>
            <person name="Kim S.-Y."/>
            <person name="Kim J."/>
            <person name="Cha S."/>
            <person name="Kim S.-Y."/>
            <person name="Darby A.C."/>
            <person name="Fuxelius H.-H."/>
            <person name="Yin J."/>
            <person name="Kim J.H."/>
            <person name="Kim J."/>
            <person name="Lee S.J."/>
            <person name="Koh Y.-S."/>
            <person name="Jang W.-J."/>
            <person name="Park K.-H."/>
            <person name="Andersson S.G.E."/>
            <person name="Choi M.-S."/>
            <person name="Kim I.-S."/>
        </authorList>
    </citation>
    <scope>NUCLEOTIDE SEQUENCE [LARGE SCALE GENOMIC DNA]</scope>
    <source>
        <strain>Boryong</strain>
    </source>
</reference>
<gene>
    <name evidence="1" type="primary">rpsE</name>
    <name type="ordered locus">OTBS_0359</name>
</gene>
<protein>
    <recommendedName>
        <fullName evidence="1">Small ribosomal subunit protein uS5</fullName>
    </recommendedName>
    <alternativeName>
        <fullName evidence="2">30S ribosomal protein S5</fullName>
    </alternativeName>
</protein>
<keyword id="KW-1185">Reference proteome</keyword>
<keyword id="KW-0687">Ribonucleoprotein</keyword>
<keyword id="KW-0689">Ribosomal protein</keyword>
<keyword id="KW-0694">RNA-binding</keyword>
<keyword id="KW-0699">rRNA-binding</keyword>
<sequence>MFKEEIVVEHLVNVNRVTKVVKGGRRFSFSACVVLGNKAGKVGYGHGKAKEVGEARLKALQNAKKYMIEVPLYKGRTIHYDVYGKSGAAKVMLRRARAGTGIIAGGAMRFIFDSLGIQDVVAKSFGSSNSYLMIAATLNALKQLETPRVIAERRGLRLNELSVTIYKTFHEG</sequence>